<evidence type="ECO:0000255" key="1">
    <source>
        <dbReference type="HAMAP-Rule" id="MF_01320"/>
    </source>
</evidence>
<evidence type="ECO:0000256" key="2">
    <source>
        <dbReference type="SAM" id="MobiDB-lite"/>
    </source>
</evidence>
<evidence type="ECO:0000305" key="3"/>
<accession>B5XJ39</accession>
<dbReference type="EMBL" id="CP000829">
    <property type="protein sequence ID" value="ACI60407.1"/>
    <property type="molecule type" value="Genomic_DNA"/>
</dbReference>
<dbReference type="SMR" id="B5XJ39"/>
<dbReference type="KEGG" id="soz:Spy49_0049"/>
<dbReference type="HOGENOM" id="CLU_036235_2_1_9"/>
<dbReference type="Proteomes" id="UP000001039">
    <property type="component" value="Chromosome"/>
</dbReference>
<dbReference type="GO" id="GO:0015934">
    <property type="term" value="C:large ribosomal subunit"/>
    <property type="evidence" value="ECO:0007669"/>
    <property type="project" value="InterPro"/>
</dbReference>
<dbReference type="GO" id="GO:0019843">
    <property type="term" value="F:rRNA binding"/>
    <property type="evidence" value="ECO:0007669"/>
    <property type="project" value="UniProtKB-UniRule"/>
</dbReference>
<dbReference type="GO" id="GO:0003735">
    <property type="term" value="F:structural constituent of ribosome"/>
    <property type="evidence" value="ECO:0007669"/>
    <property type="project" value="InterPro"/>
</dbReference>
<dbReference type="GO" id="GO:0016740">
    <property type="term" value="F:transferase activity"/>
    <property type="evidence" value="ECO:0007669"/>
    <property type="project" value="InterPro"/>
</dbReference>
<dbReference type="GO" id="GO:0002181">
    <property type="term" value="P:cytoplasmic translation"/>
    <property type="evidence" value="ECO:0007669"/>
    <property type="project" value="TreeGrafter"/>
</dbReference>
<dbReference type="FunFam" id="2.30.30.30:FF:000001">
    <property type="entry name" value="50S ribosomal protein L2"/>
    <property type="match status" value="1"/>
</dbReference>
<dbReference type="FunFam" id="2.40.50.140:FF:000003">
    <property type="entry name" value="50S ribosomal protein L2"/>
    <property type="match status" value="1"/>
</dbReference>
<dbReference type="FunFam" id="4.10.950.10:FF:000001">
    <property type="entry name" value="50S ribosomal protein L2"/>
    <property type="match status" value="1"/>
</dbReference>
<dbReference type="Gene3D" id="2.30.30.30">
    <property type="match status" value="1"/>
</dbReference>
<dbReference type="Gene3D" id="2.40.50.140">
    <property type="entry name" value="Nucleic acid-binding proteins"/>
    <property type="match status" value="1"/>
</dbReference>
<dbReference type="Gene3D" id="4.10.950.10">
    <property type="entry name" value="Ribosomal protein L2, domain 3"/>
    <property type="match status" value="1"/>
</dbReference>
<dbReference type="HAMAP" id="MF_01320_B">
    <property type="entry name" value="Ribosomal_uL2_B"/>
    <property type="match status" value="1"/>
</dbReference>
<dbReference type="InterPro" id="IPR012340">
    <property type="entry name" value="NA-bd_OB-fold"/>
</dbReference>
<dbReference type="InterPro" id="IPR014722">
    <property type="entry name" value="Rib_uL2_dom2"/>
</dbReference>
<dbReference type="InterPro" id="IPR002171">
    <property type="entry name" value="Ribosomal_uL2"/>
</dbReference>
<dbReference type="InterPro" id="IPR005880">
    <property type="entry name" value="Ribosomal_uL2_bac/org-type"/>
</dbReference>
<dbReference type="InterPro" id="IPR022669">
    <property type="entry name" value="Ribosomal_uL2_C"/>
</dbReference>
<dbReference type="InterPro" id="IPR022671">
    <property type="entry name" value="Ribosomal_uL2_CS"/>
</dbReference>
<dbReference type="InterPro" id="IPR014726">
    <property type="entry name" value="Ribosomal_uL2_dom3"/>
</dbReference>
<dbReference type="InterPro" id="IPR022666">
    <property type="entry name" value="Ribosomal_uL2_RNA-bd_dom"/>
</dbReference>
<dbReference type="InterPro" id="IPR008991">
    <property type="entry name" value="Translation_prot_SH3-like_sf"/>
</dbReference>
<dbReference type="NCBIfam" id="TIGR01171">
    <property type="entry name" value="rplB_bact"/>
    <property type="match status" value="1"/>
</dbReference>
<dbReference type="PANTHER" id="PTHR13691:SF5">
    <property type="entry name" value="LARGE RIBOSOMAL SUBUNIT PROTEIN UL2M"/>
    <property type="match status" value="1"/>
</dbReference>
<dbReference type="PANTHER" id="PTHR13691">
    <property type="entry name" value="RIBOSOMAL PROTEIN L2"/>
    <property type="match status" value="1"/>
</dbReference>
<dbReference type="Pfam" id="PF00181">
    <property type="entry name" value="Ribosomal_L2"/>
    <property type="match status" value="1"/>
</dbReference>
<dbReference type="Pfam" id="PF03947">
    <property type="entry name" value="Ribosomal_L2_C"/>
    <property type="match status" value="1"/>
</dbReference>
<dbReference type="PIRSF" id="PIRSF002158">
    <property type="entry name" value="Ribosomal_L2"/>
    <property type="match status" value="1"/>
</dbReference>
<dbReference type="SMART" id="SM01383">
    <property type="entry name" value="Ribosomal_L2"/>
    <property type="match status" value="1"/>
</dbReference>
<dbReference type="SMART" id="SM01382">
    <property type="entry name" value="Ribosomal_L2_C"/>
    <property type="match status" value="1"/>
</dbReference>
<dbReference type="SUPFAM" id="SSF50249">
    <property type="entry name" value="Nucleic acid-binding proteins"/>
    <property type="match status" value="1"/>
</dbReference>
<dbReference type="SUPFAM" id="SSF50104">
    <property type="entry name" value="Translation proteins SH3-like domain"/>
    <property type="match status" value="1"/>
</dbReference>
<dbReference type="PROSITE" id="PS00467">
    <property type="entry name" value="RIBOSOMAL_L2"/>
    <property type="match status" value="1"/>
</dbReference>
<organism>
    <name type="scientific">Streptococcus pyogenes serotype M49 (strain NZ131)</name>
    <dbReference type="NCBI Taxonomy" id="471876"/>
    <lineage>
        <taxon>Bacteria</taxon>
        <taxon>Bacillati</taxon>
        <taxon>Bacillota</taxon>
        <taxon>Bacilli</taxon>
        <taxon>Lactobacillales</taxon>
        <taxon>Streptococcaceae</taxon>
        <taxon>Streptococcus</taxon>
    </lineage>
</organism>
<gene>
    <name evidence="1" type="primary">rplB</name>
    <name type="ordered locus">Spy49_0049</name>
</gene>
<sequence>MGIKVYKPTTNGRRNMTSLDFAEITTSTPEKSLLVSLKSKAGRNNNGRITVRHQGGGHKRHYRLIDFKRNKDGVEAVVKTIEYDPNRTANIALVHYTDGVKAYIIAPKGLEVGQRIVSGPDADIKVGNALPLANIPVGTVVHNIELKPGKGGELVRAAGASAQVLGQEGKYVLVRLQSGEVRMILGTCRATIGTVGNEQQSLVNIGKAGRSRWKGIRPTVRGSVMNPNDHPHGGGEGKAPVGRKAPSTPWGKPALGLKTRNKKAKSDKLIVRRRNEK</sequence>
<name>RL2_STRPZ</name>
<proteinExistence type="inferred from homology"/>
<keyword id="KW-0687">Ribonucleoprotein</keyword>
<keyword id="KW-0689">Ribosomal protein</keyword>
<keyword id="KW-0694">RNA-binding</keyword>
<keyword id="KW-0699">rRNA-binding</keyword>
<comment type="function">
    <text evidence="1">One of the primary rRNA binding proteins. Required for association of the 30S and 50S subunits to form the 70S ribosome, for tRNA binding and peptide bond formation. It has been suggested to have peptidyltransferase activity; this is somewhat controversial. Makes several contacts with the 16S rRNA in the 70S ribosome.</text>
</comment>
<comment type="subunit">
    <text evidence="1">Part of the 50S ribosomal subunit. Forms a bridge to the 30S subunit in the 70S ribosome.</text>
</comment>
<comment type="similarity">
    <text evidence="1">Belongs to the universal ribosomal protein uL2 family.</text>
</comment>
<feature type="chain" id="PRO_1000141624" description="Large ribosomal subunit protein uL2">
    <location>
        <begin position="1"/>
        <end position="277"/>
    </location>
</feature>
<feature type="region of interest" description="Disordered" evidence="2">
    <location>
        <begin position="219"/>
        <end position="277"/>
    </location>
</feature>
<feature type="compositionally biased region" description="Basic and acidic residues" evidence="2">
    <location>
        <begin position="264"/>
        <end position="277"/>
    </location>
</feature>
<protein>
    <recommendedName>
        <fullName evidence="1">Large ribosomal subunit protein uL2</fullName>
    </recommendedName>
    <alternativeName>
        <fullName evidence="3">50S ribosomal protein L2</fullName>
    </alternativeName>
</protein>
<reference key="1">
    <citation type="journal article" date="2008" name="J. Bacteriol.">
        <title>Genome sequence of a nephritogenic and highly transformable M49 strain of Streptococcus pyogenes.</title>
        <authorList>
            <person name="McShan W.M."/>
            <person name="Ferretti J.J."/>
            <person name="Karasawa T."/>
            <person name="Suvorov A.N."/>
            <person name="Lin S."/>
            <person name="Qin B."/>
            <person name="Jia H."/>
            <person name="Kenton S."/>
            <person name="Najar F."/>
            <person name="Wu H."/>
            <person name="Scott J."/>
            <person name="Roe B.A."/>
            <person name="Savic D.J."/>
        </authorList>
    </citation>
    <scope>NUCLEOTIDE SEQUENCE [LARGE SCALE GENOMIC DNA]</scope>
    <source>
        <strain>NZ131</strain>
    </source>
</reference>